<sequence>MPNLLHVDASLAQEGSTSRSLAATYIDAWRAAHPDGTVTYRDLALTPPPHLDWATLSAAFTPPEQHTPEQTEGVKLREELIGELEAADELLLSLPMYNYSVPSTFKAWVDQVILVGRTLQQPPAESVLTGDRVTVIATQGGSYGVGTPKEGWDHQLPFIAHVLESLGATDVELVRVEMTLAPVNPALADFTDVYERSRAAGESALRARAAA</sequence>
<gene>
    <name evidence="1" type="primary">azoR</name>
    <name type="ordered locus">FRAAL1130</name>
</gene>
<protein>
    <recommendedName>
        <fullName evidence="1">FMN-dependent NADH:quinone oxidoreductase</fullName>
        <ecNumber evidence="1">1.6.5.-</ecNumber>
    </recommendedName>
    <alternativeName>
        <fullName evidence="1">Azo-dye reductase</fullName>
    </alternativeName>
    <alternativeName>
        <fullName evidence="1">FMN-dependent NADH-azo compound oxidoreductase</fullName>
    </alternativeName>
    <alternativeName>
        <fullName evidence="1">FMN-dependent NADH-azoreductase</fullName>
        <ecNumber evidence="1">1.7.1.17</ecNumber>
    </alternativeName>
</protein>
<organism>
    <name type="scientific">Frankia alni (strain DSM 45986 / CECT 9034 / ACN14a)</name>
    <dbReference type="NCBI Taxonomy" id="326424"/>
    <lineage>
        <taxon>Bacteria</taxon>
        <taxon>Bacillati</taxon>
        <taxon>Actinomycetota</taxon>
        <taxon>Actinomycetes</taxon>
        <taxon>Frankiales</taxon>
        <taxon>Frankiaceae</taxon>
        <taxon>Frankia</taxon>
    </lineage>
</organism>
<keyword id="KW-0285">Flavoprotein</keyword>
<keyword id="KW-0288">FMN</keyword>
<keyword id="KW-0520">NAD</keyword>
<keyword id="KW-0560">Oxidoreductase</keyword>
<keyword id="KW-1185">Reference proteome</keyword>
<reference key="1">
    <citation type="journal article" date="2007" name="Genome Res.">
        <title>Genome characteristics of facultatively symbiotic Frankia sp. strains reflect host range and host plant biogeography.</title>
        <authorList>
            <person name="Normand P."/>
            <person name="Lapierre P."/>
            <person name="Tisa L.S."/>
            <person name="Gogarten J.P."/>
            <person name="Alloisio N."/>
            <person name="Bagnarol E."/>
            <person name="Bassi C.A."/>
            <person name="Berry A.M."/>
            <person name="Bickhart D.M."/>
            <person name="Choisne N."/>
            <person name="Couloux A."/>
            <person name="Cournoyer B."/>
            <person name="Cruveiller S."/>
            <person name="Daubin V."/>
            <person name="Demange N."/>
            <person name="Francino M.P."/>
            <person name="Goltsman E."/>
            <person name="Huang Y."/>
            <person name="Kopp O.R."/>
            <person name="Labarre L."/>
            <person name="Lapidus A."/>
            <person name="Lavire C."/>
            <person name="Marechal J."/>
            <person name="Martinez M."/>
            <person name="Mastronunzio J.E."/>
            <person name="Mullin B.C."/>
            <person name="Niemann J."/>
            <person name="Pujic P."/>
            <person name="Rawnsley T."/>
            <person name="Rouy Z."/>
            <person name="Schenowitz C."/>
            <person name="Sellstedt A."/>
            <person name="Tavares F."/>
            <person name="Tomkins J.P."/>
            <person name="Vallenet D."/>
            <person name="Valverde C."/>
            <person name="Wall L.G."/>
            <person name="Wang Y."/>
            <person name="Medigue C."/>
            <person name="Benson D.R."/>
        </authorList>
    </citation>
    <scope>NUCLEOTIDE SEQUENCE [LARGE SCALE GENOMIC DNA]</scope>
    <source>
        <strain>DSM 45986 / CECT 9034 / ACN14a</strain>
    </source>
</reference>
<name>AZOR_FRAAA</name>
<comment type="function">
    <text evidence="1">Quinone reductase that provides resistance to thiol-specific stress caused by electrophilic quinones.</text>
</comment>
<comment type="function">
    <text evidence="1">Also exhibits azoreductase activity. Catalyzes the reductive cleavage of the azo bond in aromatic azo compounds to the corresponding amines.</text>
</comment>
<comment type="catalytic activity">
    <reaction evidence="1">
        <text>2 a quinone + NADH + H(+) = 2 a 1,4-benzosemiquinone + NAD(+)</text>
        <dbReference type="Rhea" id="RHEA:65952"/>
        <dbReference type="ChEBI" id="CHEBI:15378"/>
        <dbReference type="ChEBI" id="CHEBI:57540"/>
        <dbReference type="ChEBI" id="CHEBI:57945"/>
        <dbReference type="ChEBI" id="CHEBI:132124"/>
        <dbReference type="ChEBI" id="CHEBI:134225"/>
    </reaction>
</comment>
<comment type="catalytic activity">
    <reaction evidence="1">
        <text>N,N-dimethyl-1,4-phenylenediamine + anthranilate + 2 NAD(+) = 2-(4-dimethylaminophenyl)diazenylbenzoate + 2 NADH + 2 H(+)</text>
        <dbReference type="Rhea" id="RHEA:55872"/>
        <dbReference type="ChEBI" id="CHEBI:15378"/>
        <dbReference type="ChEBI" id="CHEBI:15783"/>
        <dbReference type="ChEBI" id="CHEBI:16567"/>
        <dbReference type="ChEBI" id="CHEBI:57540"/>
        <dbReference type="ChEBI" id="CHEBI:57945"/>
        <dbReference type="ChEBI" id="CHEBI:71579"/>
        <dbReference type="EC" id="1.7.1.17"/>
    </reaction>
</comment>
<comment type="cofactor">
    <cofactor evidence="1">
        <name>FMN</name>
        <dbReference type="ChEBI" id="CHEBI:58210"/>
    </cofactor>
    <text evidence="1">Binds 1 FMN per subunit.</text>
</comment>
<comment type="subunit">
    <text evidence="1">Homodimer.</text>
</comment>
<comment type="similarity">
    <text evidence="1">Belongs to the azoreductase type 1 family.</text>
</comment>
<proteinExistence type="inferred from homology"/>
<accession>Q0RRM3</accession>
<dbReference type="EC" id="1.6.5.-" evidence="1"/>
<dbReference type="EC" id="1.7.1.17" evidence="1"/>
<dbReference type="EMBL" id="CT573213">
    <property type="protein sequence ID" value="CAJ59794.1"/>
    <property type="molecule type" value="Genomic_DNA"/>
</dbReference>
<dbReference type="RefSeq" id="WP_011602337.1">
    <property type="nucleotide sequence ID" value="NC_008278.1"/>
</dbReference>
<dbReference type="SMR" id="Q0RRM3"/>
<dbReference type="STRING" id="326424.FRAAL1130"/>
<dbReference type="KEGG" id="fal:FRAAL1130"/>
<dbReference type="eggNOG" id="COG1182">
    <property type="taxonomic scope" value="Bacteria"/>
</dbReference>
<dbReference type="HOGENOM" id="CLU_088964_0_1_11"/>
<dbReference type="OrthoDB" id="9805013at2"/>
<dbReference type="Proteomes" id="UP000000657">
    <property type="component" value="Chromosome"/>
</dbReference>
<dbReference type="GO" id="GO:0009055">
    <property type="term" value="F:electron transfer activity"/>
    <property type="evidence" value="ECO:0007669"/>
    <property type="project" value="UniProtKB-UniRule"/>
</dbReference>
<dbReference type="GO" id="GO:0010181">
    <property type="term" value="F:FMN binding"/>
    <property type="evidence" value="ECO:0007669"/>
    <property type="project" value="UniProtKB-UniRule"/>
</dbReference>
<dbReference type="GO" id="GO:0016652">
    <property type="term" value="F:oxidoreductase activity, acting on NAD(P)H as acceptor"/>
    <property type="evidence" value="ECO:0007669"/>
    <property type="project" value="UniProtKB-UniRule"/>
</dbReference>
<dbReference type="GO" id="GO:0016655">
    <property type="term" value="F:oxidoreductase activity, acting on NAD(P)H, quinone or similar compound as acceptor"/>
    <property type="evidence" value="ECO:0007669"/>
    <property type="project" value="InterPro"/>
</dbReference>
<dbReference type="Gene3D" id="3.40.50.360">
    <property type="match status" value="1"/>
</dbReference>
<dbReference type="HAMAP" id="MF_01216">
    <property type="entry name" value="Azoreductase_type1"/>
    <property type="match status" value="1"/>
</dbReference>
<dbReference type="InterPro" id="IPR003680">
    <property type="entry name" value="Flavodoxin_fold"/>
</dbReference>
<dbReference type="InterPro" id="IPR029039">
    <property type="entry name" value="Flavoprotein-like_sf"/>
</dbReference>
<dbReference type="InterPro" id="IPR050104">
    <property type="entry name" value="FMN-dep_NADH:Q_OxRdtase_AzoR1"/>
</dbReference>
<dbReference type="InterPro" id="IPR023048">
    <property type="entry name" value="NADH:quinone_OxRdtase_FMN_depd"/>
</dbReference>
<dbReference type="PANTHER" id="PTHR43741">
    <property type="entry name" value="FMN-DEPENDENT NADH-AZOREDUCTASE 1"/>
    <property type="match status" value="1"/>
</dbReference>
<dbReference type="PANTHER" id="PTHR43741:SF4">
    <property type="entry name" value="FMN-DEPENDENT NADH:QUINONE OXIDOREDUCTASE"/>
    <property type="match status" value="1"/>
</dbReference>
<dbReference type="Pfam" id="PF02525">
    <property type="entry name" value="Flavodoxin_2"/>
    <property type="match status" value="1"/>
</dbReference>
<dbReference type="SUPFAM" id="SSF52218">
    <property type="entry name" value="Flavoproteins"/>
    <property type="match status" value="1"/>
</dbReference>
<evidence type="ECO:0000255" key="1">
    <source>
        <dbReference type="HAMAP-Rule" id="MF_01216"/>
    </source>
</evidence>
<feature type="chain" id="PRO_1000066509" description="FMN-dependent NADH:quinone oxidoreductase">
    <location>
        <begin position="1"/>
        <end position="211"/>
    </location>
</feature>
<feature type="binding site" evidence="1">
    <location>
        <position position="10"/>
    </location>
    <ligand>
        <name>FMN</name>
        <dbReference type="ChEBI" id="CHEBI:58210"/>
    </ligand>
</feature>
<feature type="binding site" evidence="1">
    <location>
        <begin position="16"/>
        <end position="18"/>
    </location>
    <ligand>
        <name>FMN</name>
        <dbReference type="ChEBI" id="CHEBI:58210"/>
    </ligand>
</feature>
<feature type="binding site" evidence="1">
    <location>
        <begin position="138"/>
        <end position="141"/>
    </location>
    <ligand>
        <name>FMN</name>
        <dbReference type="ChEBI" id="CHEBI:58210"/>
    </ligand>
</feature>